<proteinExistence type="inferred from homology"/>
<protein>
    <recommendedName>
        <fullName>Cytochrome c oxidase subunit 3</fullName>
        <ecNumber>7.1.1.9</ecNumber>
    </recommendedName>
    <alternativeName>
        <fullName>Cytochrome c oxidase polypeptide III</fullName>
    </alternativeName>
</protein>
<accession>O79407</accession>
<gene>
    <name type="primary">MT-CO3</name>
    <name type="synonym">COIII</name>
    <name type="synonym">COXIII</name>
    <name type="synonym">MTCO3</name>
</gene>
<geneLocation type="mitochondrion"/>
<organism>
    <name type="scientific">Scyliorhinus canicula</name>
    <name type="common">Small-spotted catshark</name>
    <name type="synonym">Squalus canicula</name>
    <dbReference type="NCBI Taxonomy" id="7830"/>
    <lineage>
        <taxon>Eukaryota</taxon>
        <taxon>Metazoa</taxon>
        <taxon>Chordata</taxon>
        <taxon>Craniata</taxon>
        <taxon>Vertebrata</taxon>
        <taxon>Chondrichthyes</taxon>
        <taxon>Elasmobranchii</taxon>
        <taxon>Galeomorphii</taxon>
        <taxon>Galeoidea</taxon>
        <taxon>Carcharhiniformes</taxon>
        <taxon>Scyliorhinidae</taxon>
        <taxon>Scyliorhinus</taxon>
    </lineage>
</organism>
<sequence>MAHQAHPYHMVDPSPWPLTGATAALLMTSGLAIWFHFHSLLLLYLGLTLLLLTMIQWWRDIIREGTFQGHHTPPVQKGLRYGMILFIVSEVFFFLGFFWAFYHSSLAPTPELGGCWPPTGINPLDPFEVPLLNTAVLLASGVTVTWAHHGLMEGNRKEAIQALTLTIILGVYFTALQAMEYYEAPFTIADGVYGTTFFVATGFHGLHVIIGSTFLAVCLLRQVLYHFTSEHHFGFEAAAWYWHFVDVVWLFLYVSIYWWGS</sequence>
<feature type="chain" id="PRO_0000183852" description="Cytochrome c oxidase subunit 3">
    <location>
        <begin position="1"/>
        <end position="261"/>
    </location>
</feature>
<feature type="topological domain" description="Mitochondrial matrix" evidence="1">
    <location>
        <begin position="1"/>
        <end position="15"/>
    </location>
</feature>
<feature type="transmembrane region" description="Helical; Name=I" evidence="1">
    <location>
        <begin position="16"/>
        <end position="34"/>
    </location>
</feature>
<feature type="topological domain" description="Mitochondrial intermembrane" evidence="1">
    <location>
        <begin position="35"/>
        <end position="40"/>
    </location>
</feature>
<feature type="transmembrane region" description="Helical; Name=II" evidence="1">
    <location>
        <begin position="41"/>
        <end position="66"/>
    </location>
</feature>
<feature type="topological domain" description="Mitochondrial matrix" evidence="1">
    <location>
        <begin position="67"/>
        <end position="72"/>
    </location>
</feature>
<feature type="transmembrane region" description="Helical; Name=III" evidence="1">
    <location>
        <begin position="73"/>
        <end position="105"/>
    </location>
</feature>
<feature type="topological domain" description="Mitochondrial intermembrane" evidence="1">
    <location>
        <begin position="106"/>
        <end position="128"/>
    </location>
</feature>
<feature type="transmembrane region" description="Helical; Name=IV" evidence="1">
    <location>
        <begin position="129"/>
        <end position="152"/>
    </location>
</feature>
<feature type="topological domain" description="Mitochondrial matrix" evidence="1">
    <location>
        <begin position="153"/>
        <end position="155"/>
    </location>
</feature>
<feature type="transmembrane region" description="Helical; Name=V" evidence="1">
    <location>
        <begin position="156"/>
        <end position="183"/>
    </location>
</feature>
<feature type="topological domain" description="Mitochondrial intermembrane" evidence="1">
    <location>
        <begin position="184"/>
        <end position="190"/>
    </location>
</feature>
<feature type="transmembrane region" description="Helical; Name=VI" evidence="1">
    <location>
        <begin position="191"/>
        <end position="223"/>
    </location>
</feature>
<feature type="topological domain" description="Mitochondrial matrix" evidence="1">
    <location>
        <begin position="224"/>
        <end position="232"/>
    </location>
</feature>
<feature type="transmembrane region" description="Helical; Name=VII" evidence="1">
    <location>
        <begin position="233"/>
        <end position="256"/>
    </location>
</feature>
<feature type="topological domain" description="Mitochondrial intermembrane" evidence="1">
    <location>
        <begin position="257"/>
        <end position="261"/>
    </location>
</feature>
<comment type="function">
    <text evidence="2">Component of the cytochrome c oxidase, the last enzyme in the mitochondrial electron transport chain which drives oxidative phosphorylation. The respiratory chain contains 3 multisubunit complexes succinate dehydrogenase (complex II, CII), ubiquinol-cytochrome c oxidoreductase (cytochrome b-c1 complex, complex III, CIII) and cytochrome c oxidase (complex IV, CIV), that cooperate to transfer electrons derived from NADH and succinate to molecular oxygen, creating an electrochemical gradient over the inner membrane that drives transmembrane transport and the ATP synthase. Cytochrome c oxidase is the component of the respiratory chain that catalyzes the reduction of oxygen to water. Electrons originating from reduced cytochrome c in the intermembrane space (IMS) are transferred via the dinuclear copper A center (CU(A)) of subunit 2 and heme A of subunit 1 to the active site in subunit 1, a binuclear center (BNC) formed by heme A3 and copper B (CU(B)). The BNC reduces molecular oxygen to 2 water molecules using 4 electrons from cytochrome c in the IMS and 4 protons from the mitochondrial matrix.</text>
</comment>
<comment type="catalytic activity">
    <reaction evidence="2">
        <text>4 Fe(II)-[cytochrome c] + O2 + 8 H(+)(in) = 4 Fe(III)-[cytochrome c] + 2 H2O + 4 H(+)(out)</text>
        <dbReference type="Rhea" id="RHEA:11436"/>
        <dbReference type="Rhea" id="RHEA-COMP:10350"/>
        <dbReference type="Rhea" id="RHEA-COMP:14399"/>
        <dbReference type="ChEBI" id="CHEBI:15377"/>
        <dbReference type="ChEBI" id="CHEBI:15378"/>
        <dbReference type="ChEBI" id="CHEBI:15379"/>
        <dbReference type="ChEBI" id="CHEBI:29033"/>
        <dbReference type="ChEBI" id="CHEBI:29034"/>
        <dbReference type="EC" id="7.1.1.9"/>
    </reaction>
    <physiologicalReaction direction="left-to-right" evidence="2">
        <dbReference type="Rhea" id="RHEA:11437"/>
    </physiologicalReaction>
</comment>
<comment type="subunit">
    <text evidence="1">Component of the cytochrome c oxidase (complex IV, CIV), a multisubunit enzyme composed of 14 subunits. The complex is composed of a catalytic core of 3 subunits MT-CO1, MT-CO2 and MT-CO3, encoded in the mitochondrial DNA, and 11 supernumerary subunits COX4I, COX5A, COX5B, COX6A, COX6B, COX6C, COX7A, COX7B, COX7C, COX8 and NDUFA4, which are encoded in the nuclear genome. The complex exists as a monomer or a dimer and forms supercomplexes (SCs) in the inner mitochondrial membrane with NADH-ubiquinone oxidoreductase (complex I, CI) and ubiquinol-cytochrome c oxidoreductase (cytochrome b-c1 complex, complex III, CIII), resulting in different assemblies (supercomplex SCI(1)III(2)IV(1) and megacomplex MCI(2)III(2)IV(2)).</text>
</comment>
<comment type="subcellular location">
    <subcellularLocation>
        <location evidence="1">Mitochondrion inner membrane</location>
        <topology evidence="1">Multi-pass membrane protein</topology>
    </subcellularLocation>
</comment>
<comment type="similarity">
    <text evidence="3">Belongs to the cytochrome c oxidase subunit 3 family.</text>
</comment>
<reference key="1">
    <citation type="journal article" date="1998" name="Genetics">
        <title>The complete nucleotide sequence of the mitochondrial DNA of the dogfish, Scyliorhinus canicula.</title>
        <authorList>
            <person name="Delarbre C."/>
            <person name="Spruyt N."/>
            <person name="Delmarre C."/>
            <person name="Gallut C."/>
            <person name="Barriel V."/>
            <person name="Janvier P."/>
            <person name="Laudet V."/>
            <person name="Gachelin G."/>
        </authorList>
    </citation>
    <scope>NUCLEOTIDE SEQUENCE [GENOMIC DNA]</scope>
    <source>
        <tissue>Muscle</tissue>
    </source>
</reference>
<dbReference type="EC" id="7.1.1.9"/>
<dbReference type="EMBL" id="Y16067">
    <property type="protein sequence ID" value="CAA76025.1"/>
    <property type="molecule type" value="Genomic_DNA"/>
</dbReference>
<dbReference type="PIR" id="T11306">
    <property type="entry name" value="T11306"/>
</dbReference>
<dbReference type="SMR" id="O79407"/>
<dbReference type="CTD" id="4514"/>
<dbReference type="OrthoDB" id="10050457at2759"/>
<dbReference type="GO" id="GO:0005743">
    <property type="term" value="C:mitochondrial inner membrane"/>
    <property type="evidence" value="ECO:0007669"/>
    <property type="project" value="UniProtKB-SubCell"/>
</dbReference>
<dbReference type="GO" id="GO:0045277">
    <property type="term" value="C:respiratory chain complex IV"/>
    <property type="evidence" value="ECO:0000250"/>
    <property type="project" value="UniProtKB"/>
</dbReference>
<dbReference type="GO" id="GO:0004129">
    <property type="term" value="F:cytochrome-c oxidase activity"/>
    <property type="evidence" value="ECO:0007669"/>
    <property type="project" value="UniProtKB-EC"/>
</dbReference>
<dbReference type="GO" id="GO:0006123">
    <property type="term" value="P:mitochondrial electron transport, cytochrome c to oxygen"/>
    <property type="evidence" value="ECO:0007669"/>
    <property type="project" value="TreeGrafter"/>
</dbReference>
<dbReference type="CDD" id="cd01665">
    <property type="entry name" value="Cyt_c_Oxidase_III"/>
    <property type="match status" value="1"/>
</dbReference>
<dbReference type="FunFam" id="1.10.287.70:FF:000048">
    <property type="entry name" value="Cytochrome c oxidase subunit 3"/>
    <property type="match status" value="1"/>
</dbReference>
<dbReference type="FunFam" id="1.20.120.80:FF:000002">
    <property type="entry name" value="Cytochrome c oxidase subunit 3"/>
    <property type="match status" value="1"/>
</dbReference>
<dbReference type="Gene3D" id="1.10.287.70">
    <property type="match status" value="1"/>
</dbReference>
<dbReference type="Gene3D" id="1.20.120.80">
    <property type="entry name" value="Cytochrome c oxidase, subunit III, four-helix bundle"/>
    <property type="match status" value="1"/>
</dbReference>
<dbReference type="InterPro" id="IPR024791">
    <property type="entry name" value="Cyt_c/ubiquinol_Oxase_su3"/>
</dbReference>
<dbReference type="InterPro" id="IPR033945">
    <property type="entry name" value="Cyt_c_oxase_su3_dom"/>
</dbReference>
<dbReference type="InterPro" id="IPR000298">
    <property type="entry name" value="Cyt_c_oxidase-like_su3"/>
</dbReference>
<dbReference type="InterPro" id="IPR035973">
    <property type="entry name" value="Cyt_c_oxidase_su3-like_sf"/>
</dbReference>
<dbReference type="InterPro" id="IPR013833">
    <property type="entry name" value="Cyt_c_oxidase_su3_a-hlx"/>
</dbReference>
<dbReference type="PANTHER" id="PTHR11403:SF7">
    <property type="entry name" value="CYTOCHROME C OXIDASE SUBUNIT 3"/>
    <property type="match status" value="1"/>
</dbReference>
<dbReference type="PANTHER" id="PTHR11403">
    <property type="entry name" value="CYTOCHROME C OXIDASE SUBUNIT III"/>
    <property type="match status" value="1"/>
</dbReference>
<dbReference type="Pfam" id="PF00510">
    <property type="entry name" value="COX3"/>
    <property type="match status" value="1"/>
</dbReference>
<dbReference type="SUPFAM" id="SSF81452">
    <property type="entry name" value="Cytochrome c oxidase subunit III-like"/>
    <property type="match status" value="1"/>
</dbReference>
<dbReference type="PROSITE" id="PS50253">
    <property type="entry name" value="COX3"/>
    <property type="match status" value="1"/>
</dbReference>
<name>COX3_SCYCA</name>
<keyword id="KW-0472">Membrane</keyword>
<keyword id="KW-0496">Mitochondrion</keyword>
<keyword id="KW-0999">Mitochondrion inner membrane</keyword>
<keyword id="KW-1278">Translocase</keyword>
<keyword id="KW-0812">Transmembrane</keyword>
<keyword id="KW-1133">Transmembrane helix</keyword>
<evidence type="ECO:0000250" key="1">
    <source>
        <dbReference type="UniProtKB" id="P00415"/>
    </source>
</evidence>
<evidence type="ECO:0000250" key="2">
    <source>
        <dbReference type="UniProtKB" id="P00420"/>
    </source>
</evidence>
<evidence type="ECO:0000305" key="3"/>